<gene>
    <name type="ordered locus">DR_0079</name>
</gene>
<keyword id="KW-0002">3D-structure</keyword>
<keyword id="KW-0378">Hydrolase</keyword>
<keyword id="KW-0460">Magnesium</keyword>
<keyword id="KW-0479">Metal-binding</keyword>
<keyword id="KW-0547">Nucleotide-binding</keyword>
<keyword id="KW-1185">Reference proteome</keyword>
<comment type="function">
    <text evidence="3 4">Hydrolase that converts various nucleotide triphosphates (NTPs) to the corresponding nucleotide monophosphates and diphosphate, and nucleotide diphosphates to nucleotide monophosphates and inorganic phosphate. Has a marked preference for cytosine ribonucleoside 5'-diphosphate (CDP) and cytosine ribonucleoside 5'-triphosphate (CTP). Has lower activity towards the deoxyribose nucleotides dCDP and dCTP, and towards dGDP, TDP and UDP.</text>
</comment>
<comment type="cofactor">
    <cofactor evidence="3 4">
        <name>Mg(2+)</name>
        <dbReference type="ChEBI" id="CHEBI:18420"/>
    </cofactor>
</comment>
<comment type="activity regulation">
    <text evidence="4">Inhibited by zinc, calcium or copper ions.</text>
</comment>
<comment type="biophysicochemical properties">
    <kinetics>
        <KM evidence="4">0.082 mM for CDP</KM>
        <KM evidence="4">0.034 mM for CTP</KM>
        <KM evidence="4">0.092 mM for dCDP</KM>
        <KM evidence="4">0.105 mM for TDP</KM>
        <KM evidence="4">0.137 mM for UDP</KM>
        <KM evidence="4">0.092 mM for GDP</KM>
        <KM evidence="4">0.051 mM for dGDP</KM>
        <KM evidence="4">0.046 mM for IDP</KM>
    </kinetics>
    <phDependence>
        <text evidence="4">Optimum pH is 9.0-9.5.</text>
    </phDependence>
</comment>
<comment type="subunit">
    <text evidence="2 4">Monomer.</text>
</comment>
<comment type="similarity">
    <text evidence="5">Belongs to the Nudix hydrolase family.</text>
</comment>
<protein>
    <recommendedName>
        <fullName>Nudix hydrolase DR_0079</fullName>
        <ecNumber>3.6.1.-</ecNumber>
    </recommendedName>
</protein>
<proteinExistence type="evidence at protein level"/>
<organism>
    <name type="scientific">Deinococcus radiodurans (strain ATCC 13939 / DSM 20539 / JCM 16871 / CCUG 27074 / LMG 4051 / NBRC 15346 / NCIMB 9279 / VKM B-1422 / R1)</name>
    <dbReference type="NCBI Taxonomy" id="243230"/>
    <lineage>
        <taxon>Bacteria</taxon>
        <taxon>Thermotogati</taxon>
        <taxon>Deinococcota</taxon>
        <taxon>Deinococci</taxon>
        <taxon>Deinococcales</taxon>
        <taxon>Deinococcaceae</taxon>
        <taxon>Deinococcus</taxon>
    </lineage>
</organism>
<name>Y079_DEIRA</name>
<accession>Q9RY71</accession>
<evidence type="ECO:0000255" key="1">
    <source>
        <dbReference type="PROSITE-ProRule" id="PRU00794"/>
    </source>
</evidence>
<evidence type="ECO:0000269" key="2">
    <source>
    </source>
</evidence>
<evidence type="ECO:0000269" key="3">
    <source>
    </source>
</evidence>
<evidence type="ECO:0000269" key="4">
    <source>
    </source>
</evidence>
<evidence type="ECO:0000305" key="5"/>
<evidence type="ECO:0007829" key="6">
    <source>
        <dbReference type="PDB" id="1Q27"/>
    </source>
</evidence>
<evidence type="ECO:0007829" key="7">
    <source>
        <dbReference type="PDB" id="2O5F"/>
    </source>
</evidence>
<reference key="1">
    <citation type="journal article" date="1999" name="Science">
        <title>Genome sequence of the radioresistant bacterium Deinococcus radiodurans R1.</title>
        <authorList>
            <person name="White O."/>
            <person name="Eisen J.A."/>
            <person name="Heidelberg J.F."/>
            <person name="Hickey E.K."/>
            <person name="Peterson J.D."/>
            <person name="Dodson R.J."/>
            <person name="Haft D.H."/>
            <person name="Gwinn M.L."/>
            <person name="Nelson W.C."/>
            <person name="Richardson D.L."/>
            <person name="Moffat K.S."/>
            <person name="Qin H."/>
            <person name="Jiang L."/>
            <person name="Pamphile W."/>
            <person name="Crosby M."/>
            <person name="Shen M."/>
            <person name="Vamathevan J.J."/>
            <person name="Lam P."/>
            <person name="McDonald L.A."/>
            <person name="Utterback T.R."/>
            <person name="Zalewski C."/>
            <person name="Makarova K.S."/>
            <person name="Aravind L."/>
            <person name="Daly M.J."/>
            <person name="Minton K.W."/>
            <person name="Fleischmann R.D."/>
            <person name="Ketchum K.A."/>
            <person name="Nelson K.E."/>
            <person name="Salzberg S.L."/>
            <person name="Smith H.O."/>
            <person name="Venter J.C."/>
            <person name="Fraser C.M."/>
        </authorList>
    </citation>
    <scope>NUCLEOTIDE SEQUENCE [LARGE SCALE GENOMIC DNA]</scope>
    <source>
        <strain>ATCC 13939 / DSM 20539 / JCM 16871 / CCUG 27074 / LMG 4051 / NBRC 15346 / NCIMB 9279 / VKM B-1422 / R1</strain>
    </source>
</reference>
<reference key="2">
    <citation type="journal article" date="2003" name="Acta Crystallogr. D">
        <title>Purification, crystallization and preliminary X-ray analysis of two nudix hydrolases from Deinococcus radiodurans.</title>
        <authorList>
            <person name="Holbrook E.L."/>
            <person name="Schulze-Gahmen U."/>
            <person name="Buchko G.W."/>
            <person name="Ni S."/>
            <person name="Kennedy M.A."/>
            <person name="Holbrook S.R."/>
        </authorList>
    </citation>
    <scope>SUBUNIT</scope>
    <scope>CRYSTALLIZATION</scope>
</reference>
<reference key="3">
    <citation type="journal article" date="2004" name="Proteins">
        <title>Solution structure of hypothetical Nudix hydrolase DR0079 from extremely radiation-resistant Deinococcus radiodurans bacterium.</title>
        <authorList>
            <person name="Buchko G.W."/>
            <person name="Ni S."/>
            <person name="Holbrook S.R."/>
            <person name="Kennedy M.A."/>
        </authorList>
    </citation>
    <scope>STRUCTURE BY NMR</scope>
    <scope>FUNCTION</scope>
    <scope>COFACTOR</scope>
</reference>
<reference key="4">
    <citation type="journal article" date="2008" name="Biochemistry">
        <title>Functional and structural characterization of DR_0079 from Deinococcus radiodurans, a novel Nudix hydrolase with a preference for cytosine (deoxy)ribonucleoside 5'-di- and triphosphates.</title>
        <authorList>
            <person name="Buchko G.W."/>
            <person name="Litvinova O."/>
            <person name="Robinson H."/>
            <person name="Yakunin A.F."/>
            <person name="Kennedy M.A."/>
        </authorList>
    </citation>
    <scope>X-RAY CRYSTALLOGRAPHY (1.9 ANGSTROMS)</scope>
    <scope>FUNCTION</scope>
    <scope>CATALYTIC ACTIVITY</scope>
    <scope>COFACTOR</scope>
    <scope>SUBUNIT</scope>
    <scope>ACTIVITY REGULATION</scope>
    <scope>BIOPHYSICOCHEMICAL PROPERTIES</scope>
</reference>
<sequence length="171" mass="19283">MGGVSDERLDLVNERDEVVGQILRTDPALRWERVRVVNAFLRNSQGQLWIPRRSPSKSLFPNALDVSVGGAVQSGETYEEAFRREAREELNVEIDALSWRPLASFSPFQTTLSSFMCVYELRSDATPIFNPNDISGGEWLTPEHLLARIAAGEAAKGDLAELVRRCYREEE</sequence>
<dbReference type="EC" id="3.6.1.-"/>
<dbReference type="EMBL" id="AE000513">
    <property type="protein sequence ID" value="AAF09672.1"/>
    <property type="molecule type" value="Genomic_DNA"/>
</dbReference>
<dbReference type="PIR" id="E75562">
    <property type="entry name" value="E75562"/>
</dbReference>
<dbReference type="RefSeq" id="NP_293805.1">
    <property type="nucleotide sequence ID" value="NC_001263.1"/>
</dbReference>
<dbReference type="RefSeq" id="WP_010886727.1">
    <property type="nucleotide sequence ID" value="NC_001263.1"/>
</dbReference>
<dbReference type="PDB" id="1Q27">
    <property type="method" value="NMR"/>
    <property type="chains" value="A=1-171"/>
</dbReference>
<dbReference type="PDB" id="2O5F">
    <property type="method" value="X-ray"/>
    <property type="resolution" value="1.90 A"/>
    <property type="chains" value="A/B=1-171"/>
</dbReference>
<dbReference type="PDBsum" id="1Q27"/>
<dbReference type="PDBsum" id="2O5F"/>
<dbReference type="BMRB" id="Q9RY71"/>
<dbReference type="SMR" id="Q9RY71"/>
<dbReference type="STRING" id="243230.DR_0079"/>
<dbReference type="PaxDb" id="243230-DR_0079"/>
<dbReference type="EnsemblBacteria" id="AAF09672">
    <property type="protein sequence ID" value="AAF09672"/>
    <property type="gene ID" value="DR_0079"/>
</dbReference>
<dbReference type="GeneID" id="69516309"/>
<dbReference type="KEGG" id="dra:DR_0079"/>
<dbReference type="PATRIC" id="fig|243230.17.peg.242"/>
<dbReference type="eggNOG" id="COG0494">
    <property type="taxonomic scope" value="Bacteria"/>
</dbReference>
<dbReference type="HOGENOM" id="CLU_060552_3_1_0"/>
<dbReference type="InParanoid" id="Q9RY71"/>
<dbReference type="OrthoDB" id="67499at2"/>
<dbReference type="EvolutionaryTrace" id="Q9RY71"/>
<dbReference type="Proteomes" id="UP000002524">
    <property type="component" value="Chromosome 1"/>
</dbReference>
<dbReference type="GO" id="GO:0016787">
    <property type="term" value="F:hydrolase activity"/>
    <property type="evidence" value="ECO:0000314"/>
    <property type="project" value="UniProtKB"/>
</dbReference>
<dbReference type="GO" id="GO:0000287">
    <property type="term" value="F:magnesium ion binding"/>
    <property type="evidence" value="ECO:0000314"/>
    <property type="project" value="UniProtKB"/>
</dbReference>
<dbReference type="GO" id="GO:0000166">
    <property type="term" value="F:nucleotide binding"/>
    <property type="evidence" value="ECO:0007669"/>
    <property type="project" value="UniProtKB-KW"/>
</dbReference>
<dbReference type="GO" id="GO:0009117">
    <property type="term" value="P:nucleotide metabolic process"/>
    <property type="evidence" value="ECO:0000314"/>
    <property type="project" value="UniProtKB"/>
</dbReference>
<dbReference type="CDD" id="cd24154">
    <property type="entry name" value="NUDIX_DR0079"/>
    <property type="match status" value="1"/>
</dbReference>
<dbReference type="FunFam" id="3.90.79.10:FF:000154">
    <property type="entry name" value="Nudix hydrolase DR_0079"/>
    <property type="match status" value="1"/>
</dbReference>
<dbReference type="Gene3D" id="3.90.79.10">
    <property type="entry name" value="Nucleoside Triphosphate Pyrophosphohydrolase"/>
    <property type="match status" value="1"/>
</dbReference>
<dbReference type="InterPro" id="IPR015797">
    <property type="entry name" value="NUDIX_hydrolase-like_dom_sf"/>
</dbReference>
<dbReference type="InterPro" id="IPR020084">
    <property type="entry name" value="NUDIX_hydrolase_CS"/>
</dbReference>
<dbReference type="InterPro" id="IPR000086">
    <property type="entry name" value="NUDIX_hydrolase_dom"/>
</dbReference>
<dbReference type="PANTHER" id="PTHR10885">
    <property type="entry name" value="ISOPENTENYL-DIPHOSPHATE DELTA-ISOMERASE"/>
    <property type="match status" value="1"/>
</dbReference>
<dbReference type="PANTHER" id="PTHR10885:SF0">
    <property type="entry name" value="ISOPENTENYL-DIPHOSPHATE DELTA-ISOMERASE"/>
    <property type="match status" value="1"/>
</dbReference>
<dbReference type="Pfam" id="PF00293">
    <property type="entry name" value="NUDIX"/>
    <property type="match status" value="1"/>
</dbReference>
<dbReference type="SUPFAM" id="SSF55811">
    <property type="entry name" value="Nudix"/>
    <property type="match status" value="1"/>
</dbReference>
<dbReference type="PROSITE" id="PS51462">
    <property type="entry name" value="NUDIX"/>
    <property type="match status" value="1"/>
</dbReference>
<dbReference type="PROSITE" id="PS00893">
    <property type="entry name" value="NUDIX_BOX"/>
    <property type="match status" value="1"/>
</dbReference>
<feature type="chain" id="PRO_0000057076" description="Nudix hydrolase DR_0079">
    <location>
        <begin position="1"/>
        <end position="171"/>
    </location>
</feature>
<feature type="domain" description="Nudix hydrolase" evidence="1">
    <location>
        <begin position="32"/>
        <end position="162"/>
    </location>
</feature>
<feature type="short sequence motif" description="Nudix box">
    <location>
        <begin position="69"/>
        <end position="91"/>
    </location>
</feature>
<feature type="binding site" evidence="5">
    <location>
        <position position="85"/>
    </location>
    <ligand>
        <name>Mg(2+)</name>
        <dbReference type="ChEBI" id="CHEBI:18420"/>
    </ligand>
</feature>
<feature type="binding site" evidence="5">
    <location>
        <position position="89"/>
    </location>
    <ligand>
        <name>Mg(2+)</name>
        <dbReference type="ChEBI" id="CHEBI:18420"/>
    </ligand>
</feature>
<feature type="strand" evidence="7">
    <location>
        <begin position="8"/>
        <end position="12"/>
    </location>
</feature>
<feature type="strand" evidence="7">
    <location>
        <begin position="18"/>
        <end position="23"/>
    </location>
</feature>
<feature type="helix" evidence="7">
    <location>
        <begin position="31"/>
        <end position="33"/>
    </location>
</feature>
<feature type="strand" evidence="7">
    <location>
        <begin position="34"/>
        <end position="42"/>
    </location>
</feature>
<feature type="turn" evidence="6">
    <location>
        <begin position="44"/>
        <end position="46"/>
    </location>
</feature>
<feature type="strand" evidence="7">
    <location>
        <begin position="48"/>
        <end position="52"/>
    </location>
</feature>
<feature type="strand" evidence="7">
    <location>
        <begin position="58"/>
        <end position="60"/>
    </location>
</feature>
<feature type="strand" evidence="7">
    <location>
        <begin position="67"/>
        <end position="71"/>
    </location>
</feature>
<feature type="strand" evidence="6">
    <location>
        <begin position="73"/>
        <end position="76"/>
    </location>
</feature>
<feature type="helix" evidence="7">
    <location>
        <begin position="78"/>
        <end position="90"/>
    </location>
</feature>
<feature type="helix" evidence="7">
    <location>
        <begin position="94"/>
        <end position="96"/>
    </location>
</feature>
<feature type="strand" evidence="7">
    <location>
        <begin position="97"/>
        <end position="105"/>
    </location>
</feature>
<feature type="turn" evidence="7">
    <location>
        <begin position="107"/>
        <end position="109"/>
    </location>
</feature>
<feature type="strand" evidence="7">
    <location>
        <begin position="113"/>
        <end position="122"/>
    </location>
</feature>
<feature type="turn" evidence="7">
    <location>
        <begin position="131"/>
        <end position="133"/>
    </location>
</feature>
<feature type="strand" evidence="7">
    <location>
        <begin position="135"/>
        <end position="140"/>
    </location>
</feature>
<feature type="helix" evidence="7">
    <location>
        <begin position="142"/>
        <end position="151"/>
    </location>
</feature>
<feature type="helix" evidence="7">
    <location>
        <begin position="159"/>
        <end position="166"/>
    </location>
</feature>